<feature type="chain" id="PRO_0000301433" description="UDP-N-acetylmuramoylalanine--D-glutamate ligase">
    <location>
        <begin position="1"/>
        <end position="449"/>
    </location>
</feature>
<feature type="binding site" evidence="1">
    <location>
        <begin position="119"/>
        <end position="125"/>
    </location>
    <ligand>
        <name>ATP</name>
        <dbReference type="ChEBI" id="CHEBI:30616"/>
    </ligand>
</feature>
<evidence type="ECO:0000255" key="1">
    <source>
        <dbReference type="HAMAP-Rule" id="MF_00639"/>
    </source>
</evidence>
<keyword id="KW-0067">ATP-binding</keyword>
<keyword id="KW-0131">Cell cycle</keyword>
<keyword id="KW-0132">Cell division</keyword>
<keyword id="KW-0133">Cell shape</keyword>
<keyword id="KW-0961">Cell wall biogenesis/degradation</keyword>
<keyword id="KW-0963">Cytoplasm</keyword>
<keyword id="KW-0436">Ligase</keyword>
<keyword id="KW-0547">Nucleotide-binding</keyword>
<keyword id="KW-0573">Peptidoglycan synthesis</keyword>
<sequence>MKKITKFKDQKILVLGLARSGMAAALVLNELGAIVTVNDGKPFEENKEAQVLLEEGIKVITGSHPIDLLDEDFALMVKNPGIRYDNPMVERAEALKIPVITEVELAYLVSEAPIIGITGTNGKTTTTTLIADILNADGQSAKLSGNIGFPASEVAQKAQATDTLVMELSSFQLMGIDTFRPKIALITNLFSAHLDYHGSQEAYEAAKWRIQENMTADDFLILNFNQEKCRKLADKTKATVLAFSTKEKVSGAYVNEGKIYFKDEFIMEASELSLPGDHNLENALAAIVASKLRGAENEAIIEVLTSFAGVKHRLQYLGEIDGRKVYNDSKATNILATQKALSGFDNSKLWLLAGGLDRGNGFEDLEKDLEDLKGMVVFGQTADKLRLMAEKLNIPVFASQNVATALKEIMPQTQVGDTILLSPACASWDQYKTFEERGDLFIEAFESLK</sequence>
<comment type="function">
    <text evidence="1">Cell wall formation. Catalyzes the addition of glutamate to the nucleotide precursor UDP-N-acetylmuramoyl-L-alanine (UMA).</text>
</comment>
<comment type="catalytic activity">
    <reaction evidence="1">
        <text>UDP-N-acetyl-alpha-D-muramoyl-L-alanine + D-glutamate + ATP = UDP-N-acetyl-alpha-D-muramoyl-L-alanyl-D-glutamate + ADP + phosphate + H(+)</text>
        <dbReference type="Rhea" id="RHEA:16429"/>
        <dbReference type="ChEBI" id="CHEBI:15378"/>
        <dbReference type="ChEBI" id="CHEBI:29986"/>
        <dbReference type="ChEBI" id="CHEBI:30616"/>
        <dbReference type="ChEBI" id="CHEBI:43474"/>
        <dbReference type="ChEBI" id="CHEBI:83898"/>
        <dbReference type="ChEBI" id="CHEBI:83900"/>
        <dbReference type="ChEBI" id="CHEBI:456216"/>
        <dbReference type="EC" id="6.3.2.9"/>
    </reaction>
</comment>
<comment type="pathway">
    <text evidence="1">Cell wall biogenesis; peptidoglycan biosynthesis.</text>
</comment>
<comment type="subcellular location">
    <subcellularLocation>
        <location evidence="1">Cytoplasm</location>
    </subcellularLocation>
</comment>
<comment type="similarity">
    <text evidence="1">Belongs to the MurCDEF family.</text>
</comment>
<proteinExistence type="inferred from homology"/>
<gene>
    <name evidence="1" type="primary">murD</name>
    <name type="ordered locus">LACR_1697</name>
</gene>
<name>MURD_LACLS</name>
<accession>Q02XX9</accession>
<protein>
    <recommendedName>
        <fullName evidence="1">UDP-N-acetylmuramoylalanine--D-glutamate ligase</fullName>
        <ecNumber evidence="1">6.3.2.9</ecNumber>
    </recommendedName>
    <alternativeName>
        <fullName evidence="1">D-glutamic acid-adding enzyme</fullName>
    </alternativeName>
    <alternativeName>
        <fullName evidence="1">UDP-N-acetylmuramoyl-L-alanyl-D-glutamate synthetase</fullName>
    </alternativeName>
</protein>
<dbReference type="EC" id="6.3.2.9" evidence="1"/>
<dbReference type="EMBL" id="CP000425">
    <property type="protein sequence ID" value="ABJ73193.1"/>
    <property type="molecule type" value="Genomic_DNA"/>
</dbReference>
<dbReference type="RefSeq" id="WP_011676627.1">
    <property type="nucleotide sequence ID" value="NC_008527.1"/>
</dbReference>
<dbReference type="SMR" id="Q02XX9"/>
<dbReference type="KEGG" id="llc:LACR_1697"/>
<dbReference type="HOGENOM" id="CLU_032540_0_1_9"/>
<dbReference type="UniPathway" id="UPA00219"/>
<dbReference type="Proteomes" id="UP000000240">
    <property type="component" value="Chromosome"/>
</dbReference>
<dbReference type="GO" id="GO:0005737">
    <property type="term" value="C:cytoplasm"/>
    <property type="evidence" value="ECO:0007669"/>
    <property type="project" value="UniProtKB-SubCell"/>
</dbReference>
<dbReference type="GO" id="GO:0005524">
    <property type="term" value="F:ATP binding"/>
    <property type="evidence" value="ECO:0007669"/>
    <property type="project" value="UniProtKB-UniRule"/>
</dbReference>
<dbReference type="GO" id="GO:0008764">
    <property type="term" value="F:UDP-N-acetylmuramoylalanine-D-glutamate ligase activity"/>
    <property type="evidence" value="ECO:0007669"/>
    <property type="project" value="UniProtKB-UniRule"/>
</dbReference>
<dbReference type="GO" id="GO:0051301">
    <property type="term" value="P:cell division"/>
    <property type="evidence" value="ECO:0007669"/>
    <property type="project" value="UniProtKB-KW"/>
</dbReference>
<dbReference type="GO" id="GO:0071555">
    <property type="term" value="P:cell wall organization"/>
    <property type="evidence" value="ECO:0007669"/>
    <property type="project" value="UniProtKB-KW"/>
</dbReference>
<dbReference type="GO" id="GO:0009252">
    <property type="term" value="P:peptidoglycan biosynthetic process"/>
    <property type="evidence" value="ECO:0007669"/>
    <property type="project" value="UniProtKB-UniRule"/>
</dbReference>
<dbReference type="GO" id="GO:0008360">
    <property type="term" value="P:regulation of cell shape"/>
    <property type="evidence" value="ECO:0007669"/>
    <property type="project" value="UniProtKB-KW"/>
</dbReference>
<dbReference type="Gene3D" id="3.90.190.20">
    <property type="entry name" value="Mur ligase, C-terminal domain"/>
    <property type="match status" value="1"/>
</dbReference>
<dbReference type="Gene3D" id="3.40.1190.10">
    <property type="entry name" value="Mur-like, catalytic domain"/>
    <property type="match status" value="1"/>
</dbReference>
<dbReference type="Gene3D" id="3.40.50.720">
    <property type="entry name" value="NAD(P)-binding Rossmann-like Domain"/>
    <property type="match status" value="1"/>
</dbReference>
<dbReference type="HAMAP" id="MF_00639">
    <property type="entry name" value="MurD"/>
    <property type="match status" value="1"/>
</dbReference>
<dbReference type="InterPro" id="IPR036565">
    <property type="entry name" value="Mur-like_cat_sf"/>
</dbReference>
<dbReference type="InterPro" id="IPR004101">
    <property type="entry name" value="Mur_ligase_C"/>
</dbReference>
<dbReference type="InterPro" id="IPR036615">
    <property type="entry name" value="Mur_ligase_C_dom_sf"/>
</dbReference>
<dbReference type="InterPro" id="IPR013221">
    <property type="entry name" value="Mur_ligase_cen"/>
</dbReference>
<dbReference type="InterPro" id="IPR005762">
    <property type="entry name" value="MurD"/>
</dbReference>
<dbReference type="NCBIfam" id="TIGR01087">
    <property type="entry name" value="murD"/>
    <property type="match status" value="1"/>
</dbReference>
<dbReference type="PANTHER" id="PTHR43692">
    <property type="entry name" value="UDP-N-ACETYLMURAMOYLALANINE--D-GLUTAMATE LIGASE"/>
    <property type="match status" value="1"/>
</dbReference>
<dbReference type="PANTHER" id="PTHR43692:SF1">
    <property type="entry name" value="UDP-N-ACETYLMURAMOYLALANINE--D-GLUTAMATE LIGASE"/>
    <property type="match status" value="1"/>
</dbReference>
<dbReference type="Pfam" id="PF02875">
    <property type="entry name" value="Mur_ligase_C"/>
    <property type="match status" value="1"/>
</dbReference>
<dbReference type="Pfam" id="PF08245">
    <property type="entry name" value="Mur_ligase_M"/>
    <property type="match status" value="1"/>
</dbReference>
<dbReference type="Pfam" id="PF21799">
    <property type="entry name" value="MurD-like_N"/>
    <property type="match status" value="1"/>
</dbReference>
<dbReference type="SUPFAM" id="SSF51984">
    <property type="entry name" value="MurCD N-terminal domain"/>
    <property type="match status" value="1"/>
</dbReference>
<dbReference type="SUPFAM" id="SSF53623">
    <property type="entry name" value="MurD-like peptide ligases, catalytic domain"/>
    <property type="match status" value="1"/>
</dbReference>
<dbReference type="SUPFAM" id="SSF53244">
    <property type="entry name" value="MurD-like peptide ligases, peptide-binding domain"/>
    <property type="match status" value="1"/>
</dbReference>
<reference key="1">
    <citation type="journal article" date="2006" name="Proc. Natl. Acad. Sci. U.S.A.">
        <title>Comparative genomics of the lactic acid bacteria.</title>
        <authorList>
            <person name="Makarova K.S."/>
            <person name="Slesarev A."/>
            <person name="Wolf Y.I."/>
            <person name="Sorokin A."/>
            <person name="Mirkin B."/>
            <person name="Koonin E.V."/>
            <person name="Pavlov A."/>
            <person name="Pavlova N."/>
            <person name="Karamychev V."/>
            <person name="Polouchine N."/>
            <person name="Shakhova V."/>
            <person name="Grigoriev I."/>
            <person name="Lou Y."/>
            <person name="Rohksar D."/>
            <person name="Lucas S."/>
            <person name="Huang K."/>
            <person name="Goodstein D.M."/>
            <person name="Hawkins T."/>
            <person name="Plengvidhya V."/>
            <person name="Welker D."/>
            <person name="Hughes J."/>
            <person name="Goh Y."/>
            <person name="Benson A."/>
            <person name="Baldwin K."/>
            <person name="Lee J.-H."/>
            <person name="Diaz-Muniz I."/>
            <person name="Dosti B."/>
            <person name="Smeianov V."/>
            <person name="Wechter W."/>
            <person name="Barabote R."/>
            <person name="Lorca G."/>
            <person name="Altermann E."/>
            <person name="Barrangou R."/>
            <person name="Ganesan B."/>
            <person name="Xie Y."/>
            <person name="Rawsthorne H."/>
            <person name="Tamir D."/>
            <person name="Parker C."/>
            <person name="Breidt F."/>
            <person name="Broadbent J.R."/>
            <person name="Hutkins R."/>
            <person name="O'Sullivan D."/>
            <person name="Steele J."/>
            <person name="Unlu G."/>
            <person name="Saier M.H. Jr."/>
            <person name="Klaenhammer T."/>
            <person name="Richardson P."/>
            <person name="Kozyavkin S."/>
            <person name="Weimer B.C."/>
            <person name="Mills D.A."/>
        </authorList>
    </citation>
    <scope>NUCLEOTIDE SEQUENCE [LARGE SCALE GENOMIC DNA]</scope>
    <source>
        <strain>SK11</strain>
    </source>
</reference>
<organism>
    <name type="scientific">Lactococcus lactis subsp. cremoris (strain SK11)</name>
    <dbReference type="NCBI Taxonomy" id="272622"/>
    <lineage>
        <taxon>Bacteria</taxon>
        <taxon>Bacillati</taxon>
        <taxon>Bacillota</taxon>
        <taxon>Bacilli</taxon>
        <taxon>Lactobacillales</taxon>
        <taxon>Streptococcaceae</taxon>
        <taxon>Lactococcus</taxon>
        <taxon>Lactococcus cremoris subsp. cremoris</taxon>
    </lineage>
</organism>